<feature type="chain" id="PRO_0000179343" description="Trigger factor">
    <location>
        <begin position="1"/>
        <end position="442"/>
    </location>
</feature>
<feature type="domain" description="PPIase FKBP-type" evidence="1">
    <location>
        <begin position="165"/>
        <end position="250"/>
    </location>
</feature>
<comment type="function">
    <text evidence="1">Involved in protein export. Acts as a chaperone by maintaining the newly synthesized protein in an open conformation. Functions as a peptidyl-prolyl cis-trans isomerase.</text>
</comment>
<comment type="catalytic activity">
    <reaction evidence="1">
        <text>[protein]-peptidylproline (omega=180) = [protein]-peptidylproline (omega=0)</text>
        <dbReference type="Rhea" id="RHEA:16237"/>
        <dbReference type="Rhea" id="RHEA-COMP:10747"/>
        <dbReference type="Rhea" id="RHEA-COMP:10748"/>
        <dbReference type="ChEBI" id="CHEBI:83833"/>
        <dbReference type="ChEBI" id="CHEBI:83834"/>
        <dbReference type="EC" id="5.2.1.8"/>
    </reaction>
</comment>
<comment type="subcellular location">
    <subcellularLocation>
        <location>Cytoplasm</location>
    </subcellularLocation>
    <text evidence="1">About half TF is bound to the ribosome near the polypeptide exit tunnel while the other half is free in the cytoplasm.</text>
</comment>
<comment type="developmental stage">
    <text evidence="2">More than twofold more abundant in the large cell variant (LCV) stage than in the small cell variant (SCV) stage (at protein level). LCVs are more metabolically active than SCVs.</text>
</comment>
<comment type="domain">
    <text evidence="1">Consists of 3 domains; the N-terminus binds the ribosome, the middle domain has PPIase activity, while the C-terminus has intrinsic chaperone activity on its own.</text>
</comment>
<comment type="similarity">
    <text evidence="1">Belongs to the FKBP-type PPIase family. Tig subfamily.</text>
</comment>
<protein>
    <recommendedName>
        <fullName evidence="1">Trigger factor</fullName>
        <shortName evidence="1">TF</shortName>
        <ecNumber evidence="1">5.2.1.8</ecNumber>
    </recommendedName>
    <alternativeName>
        <fullName evidence="1">PPIase</fullName>
    </alternativeName>
</protein>
<sequence length="442" mass="50247">MRGNFMSSIEKLGGLKQRLTITVPAEEVDKAYKSRLLKVARTAKIPKFRPGKASPAVVEKLYGKAILQEVGSELIQSSLREAVEEHQLRVAGAPDIKMDKILRGEPFKYVVNFEVYPEITLESLAGETIERTQVEITEEDLDKMLEALRKQYAEWKEMDRPAKADDRVIIDFEGTLDGKPFERGSAKDFQLELGSKRMIAGFEEGIEGMKPGESKALDITFPADYPSEDLAGKAAVFNITLQKVMAPELPVLDEQFAERLGIKEGGLEALRQKVRTNMEKEVHHHMENKLKMAVLDKLIERNPIEVPESLIEAEIDHLQQMTRQQVAMQTHKPDEAKKMELPRDPYREQATKRVKLGLLLAEVVKQHKIKADPEQLRARVEEVAASYQDPEKVISWYYTNKQMLSEIESVVLEDQAVAQLMSELEVKDQAIPYEEAVKQIQQ</sequence>
<evidence type="ECO:0000255" key="1">
    <source>
        <dbReference type="HAMAP-Rule" id="MF_00303"/>
    </source>
</evidence>
<evidence type="ECO:0000269" key="2">
    <source>
    </source>
</evidence>
<name>TIG_COXBU</name>
<proteinExistence type="evidence at protein level"/>
<gene>
    <name evidence="1" type="primary">tig</name>
    <name type="ordered locus">CBU_0737</name>
</gene>
<dbReference type="EC" id="5.2.1.8" evidence="1"/>
<dbReference type="EMBL" id="AE016828">
    <property type="protein sequence ID" value="AAO90277.1"/>
    <property type="molecule type" value="Genomic_DNA"/>
</dbReference>
<dbReference type="RefSeq" id="NP_819763.1">
    <property type="nucleotide sequence ID" value="NC_002971.4"/>
</dbReference>
<dbReference type="RefSeq" id="WP_010957768.1">
    <property type="nucleotide sequence ID" value="NC_002971.4"/>
</dbReference>
<dbReference type="SMR" id="Q83DJ3"/>
<dbReference type="STRING" id="227377.CBU_0737"/>
<dbReference type="EnsemblBacteria" id="AAO90277">
    <property type="protein sequence ID" value="AAO90277"/>
    <property type="gene ID" value="CBU_0737"/>
</dbReference>
<dbReference type="GeneID" id="1208628"/>
<dbReference type="KEGG" id="cbu:CBU_0737"/>
<dbReference type="PATRIC" id="fig|227377.7.peg.721"/>
<dbReference type="eggNOG" id="COG0544">
    <property type="taxonomic scope" value="Bacteria"/>
</dbReference>
<dbReference type="HOGENOM" id="CLU_033058_2_0_6"/>
<dbReference type="OrthoDB" id="9767721at2"/>
<dbReference type="Proteomes" id="UP000002671">
    <property type="component" value="Chromosome"/>
</dbReference>
<dbReference type="GO" id="GO:0005737">
    <property type="term" value="C:cytoplasm"/>
    <property type="evidence" value="ECO:0007669"/>
    <property type="project" value="UniProtKB-SubCell"/>
</dbReference>
<dbReference type="GO" id="GO:0003755">
    <property type="term" value="F:peptidyl-prolyl cis-trans isomerase activity"/>
    <property type="evidence" value="ECO:0000318"/>
    <property type="project" value="GO_Central"/>
</dbReference>
<dbReference type="GO" id="GO:0044183">
    <property type="term" value="F:protein folding chaperone"/>
    <property type="evidence" value="ECO:0000318"/>
    <property type="project" value="GO_Central"/>
</dbReference>
<dbReference type="GO" id="GO:0043022">
    <property type="term" value="F:ribosome binding"/>
    <property type="evidence" value="ECO:0000318"/>
    <property type="project" value="GO_Central"/>
</dbReference>
<dbReference type="GO" id="GO:0051083">
    <property type="term" value="P:'de novo' cotranslational protein folding"/>
    <property type="evidence" value="ECO:0000318"/>
    <property type="project" value="GO_Central"/>
</dbReference>
<dbReference type="GO" id="GO:0051301">
    <property type="term" value="P:cell division"/>
    <property type="evidence" value="ECO:0007669"/>
    <property type="project" value="UniProtKB-KW"/>
</dbReference>
<dbReference type="GO" id="GO:0061077">
    <property type="term" value="P:chaperone-mediated protein folding"/>
    <property type="evidence" value="ECO:0000318"/>
    <property type="project" value="GO_Central"/>
</dbReference>
<dbReference type="GO" id="GO:0015031">
    <property type="term" value="P:protein transport"/>
    <property type="evidence" value="ECO:0007669"/>
    <property type="project" value="UniProtKB-UniRule"/>
</dbReference>
<dbReference type="GO" id="GO:0043335">
    <property type="term" value="P:protein unfolding"/>
    <property type="evidence" value="ECO:0000318"/>
    <property type="project" value="GO_Central"/>
</dbReference>
<dbReference type="FunFam" id="3.10.50.40:FF:000001">
    <property type="entry name" value="Trigger factor"/>
    <property type="match status" value="1"/>
</dbReference>
<dbReference type="Gene3D" id="3.10.50.40">
    <property type="match status" value="1"/>
</dbReference>
<dbReference type="Gene3D" id="3.30.70.1050">
    <property type="entry name" value="Trigger factor ribosome-binding domain"/>
    <property type="match status" value="1"/>
</dbReference>
<dbReference type="Gene3D" id="1.10.3120.10">
    <property type="entry name" value="Trigger factor, C-terminal domain"/>
    <property type="match status" value="1"/>
</dbReference>
<dbReference type="HAMAP" id="MF_00303">
    <property type="entry name" value="Trigger_factor_Tig"/>
    <property type="match status" value="1"/>
</dbReference>
<dbReference type="InterPro" id="IPR046357">
    <property type="entry name" value="PPIase_dom_sf"/>
</dbReference>
<dbReference type="InterPro" id="IPR001179">
    <property type="entry name" value="PPIase_FKBP_dom"/>
</dbReference>
<dbReference type="InterPro" id="IPR005215">
    <property type="entry name" value="Trig_fac"/>
</dbReference>
<dbReference type="InterPro" id="IPR008880">
    <property type="entry name" value="Trigger_fac_C"/>
</dbReference>
<dbReference type="InterPro" id="IPR037041">
    <property type="entry name" value="Trigger_fac_C_sf"/>
</dbReference>
<dbReference type="InterPro" id="IPR008881">
    <property type="entry name" value="Trigger_fac_ribosome-bd_bac"/>
</dbReference>
<dbReference type="InterPro" id="IPR036611">
    <property type="entry name" value="Trigger_fac_ribosome-bd_sf"/>
</dbReference>
<dbReference type="InterPro" id="IPR027304">
    <property type="entry name" value="Trigger_fact/SurA_dom_sf"/>
</dbReference>
<dbReference type="NCBIfam" id="TIGR00115">
    <property type="entry name" value="tig"/>
    <property type="match status" value="1"/>
</dbReference>
<dbReference type="PANTHER" id="PTHR30560">
    <property type="entry name" value="TRIGGER FACTOR CHAPERONE AND PEPTIDYL-PROLYL CIS/TRANS ISOMERASE"/>
    <property type="match status" value="1"/>
</dbReference>
<dbReference type="PANTHER" id="PTHR30560:SF3">
    <property type="entry name" value="TRIGGER FACTOR-LIKE PROTEIN TIG, CHLOROPLASTIC"/>
    <property type="match status" value="1"/>
</dbReference>
<dbReference type="Pfam" id="PF00254">
    <property type="entry name" value="FKBP_C"/>
    <property type="match status" value="1"/>
</dbReference>
<dbReference type="Pfam" id="PF05698">
    <property type="entry name" value="Trigger_C"/>
    <property type="match status" value="1"/>
</dbReference>
<dbReference type="Pfam" id="PF05697">
    <property type="entry name" value="Trigger_N"/>
    <property type="match status" value="1"/>
</dbReference>
<dbReference type="PIRSF" id="PIRSF003095">
    <property type="entry name" value="Trigger_factor"/>
    <property type="match status" value="1"/>
</dbReference>
<dbReference type="SUPFAM" id="SSF54534">
    <property type="entry name" value="FKBP-like"/>
    <property type="match status" value="1"/>
</dbReference>
<dbReference type="SUPFAM" id="SSF109998">
    <property type="entry name" value="Triger factor/SurA peptide-binding domain-like"/>
    <property type="match status" value="1"/>
</dbReference>
<dbReference type="SUPFAM" id="SSF102735">
    <property type="entry name" value="Trigger factor ribosome-binding domain"/>
    <property type="match status" value="1"/>
</dbReference>
<dbReference type="PROSITE" id="PS50059">
    <property type="entry name" value="FKBP_PPIASE"/>
    <property type="match status" value="1"/>
</dbReference>
<organism>
    <name type="scientific">Coxiella burnetii (strain RSA 493 / Nine Mile phase I)</name>
    <dbReference type="NCBI Taxonomy" id="227377"/>
    <lineage>
        <taxon>Bacteria</taxon>
        <taxon>Pseudomonadati</taxon>
        <taxon>Pseudomonadota</taxon>
        <taxon>Gammaproteobacteria</taxon>
        <taxon>Legionellales</taxon>
        <taxon>Coxiellaceae</taxon>
        <taxon>Coxiella</taxon>
    </lineage>
</organism>
<accession>Q83DJ3</accession>
<reference key="1">
    <citation type="journal article" date="2003" name="Proc. Natl. Acad. Sci. U.S.A.">
        <title>Complete genome sequence of the Q-fever pathogen, Coxiella burnetii.</title>
        <authorList>
            <person name="Seshadri R."/>
            <person name="Paulsen I.T."/>
            <person name="Eisen J.A."/>
            <person name="Read T.D."/>
            <person name="Nelson K.E."/>
            <person name="Nelson W.C."/>
            <person name="Ward N.L."/>
            <person name="Tettelin H."/>
            <person name="Davidsen T.M."/>
            <person name="Beanan M.J."/>
            <person name="DeBoy R.T."/>
            <person name="Daugherty S.C."/>
            <person name="Brinkac L.M."/>
            <person name="Madupu R."/>
            <person name="Dodson R.J."/>
            <person name="Khouri H.M."/>
            <person name="Lee K.H."/>
            <person name="Carty H.A."/>
            <person name="Scanlan D."/>
            <person name="Heinzen R.A."/>
            <person name="Thompson H.A."/>
            <person name="Samuel J.E."/>
            <person name="Fraser C.M."/>
            <person name="Heidelberg J.F."/>
        </authorList>
    </citation>
    <scope>NUCLEOTIDE SEQUENCE [LARGE SCALE GENOMIC DNA]</scope>
    <source>
        <strain>RSA 493 / Nine Mile phase I</strain>
    </source>
</reference>
<reference key="2">
    <citation type="journal article" date="2007" name="Infect. Immun.">
        <title>Proteome and antigen profiling of Coxiella burnetii developmental forms.</title>
        <authorList>
            <person name="Coleman S.A."/>
            <person name="Fischer E.R."/>
            <person name="Cockrell D.C."/>
            <person name="Voth D.E."/>
            <person name="Howe D."/>
            <person name="Mead D.J."/>
            <person name="Samuel J.E."/>
            <person name="Heinzen R.A."/>
        </authorList>
    </citation>
    <scope>IDENTIFICATION BY MASS SPECTROMETRY</scope>
    <scope>DEVELOPMENTAL STAGE</scope>
    <source>
        <strain>Nine Mile Crazy / RSA 514</strain>
    </source>
</reference>
<keyword id="KW-0131">Cell cycle</keyword>
<keyword id="KW-0132">Cell division</keyword>
<keyword id="KW-0143">Chaperone</keyword>
<keyword id="KW-0963">Cytoplasm</keyword>
<keyword id="KW-0413">Isomerase</keyword>
<keyword id="KW-1185">Reference proteome</keyword>
<keyword id="KW-0697">Rotamase</keyword>